<organism>
    <name type="scientific">Saccharomyces cerevisiae (strain ATCC 204508 / S288c)</name>
    <name type="common">Baker's yeast</name>
    <dbReference type="NCBI Taxonomy" id="559292"/>
    <lineage>
        <taxon>Eukaryota</taxon>
        <taxon>Fungi</taxon>
        <taxon>Dikarya</taxon>
        <taxon>Ascomycota</taxon>
        <taxon>Saccharomycotina</taxon>
        <taxon>Saccharomycetes</taxon>
        <taxon>Saccharomycetales</taxon>
        <taxon>Saccharomycetaceae</taxon>
        <taxon>Saccharomyces</taxon>
    </lineage>
</organism>
<name>DHE2_YEAST</name>
<proteinExistence type="evidence at protein level"/>
<comment type="function">
    <text>NAD(+)-dependent glutamate dehydrogenase which degrades glutamate to ammonia and alpha-ketoglutarate.</text>
</comment>
<comment type="catalytic activity">
    <reaction>
        <text>L-glutamate + NAD(+) + H2O = 2-oxoglutarate + NH4(+) + NADH + H(+)</text>
        <dbReference type="Rhea" id="RHEA:15133"/>
        <dbReference type="ChEBI" id="CHEBI:15377"/>
        <dbReference type="ChEBI" id="CHEBI:15378"/>
        <dbReference type="ChEBI" id="CHEBI:16810"/>
        <dbReference type="ChEBI" id="CHEBI:28938"/>
        <dbReference type="ChEBI" id="CHEBI:29985"/>
        <dbReference type="ChEBI" id="CHEBI:57540"/>
        <dbReference type="ChEBI" id="CHEBI:57945"/>
        <dbReference type="EC" id="1.4.1.2"/>
    </reaction>
</comment>
<comment type="subunit">
    <text evidence="3">Homotetramer. Interacts with NNK1.</text>
</comment>
<comment type="interaction">
    <interactant intactId="EBI-5815">
        <id>P33327</id>
    </interactant>
    <interactant intactId="EBI-9796">
        <id>P36003</id>
        <label>NNK1</label>
    </interactant>
    <organismsDiffer>false</organismsDiffer>
    <experiments>4</experiments>
</comment>
<comment type="PTM">
    <text evidence="3">Phosphorylated by a complex containing the NNK1 kinase.</text>
</comment>
<comment type="disruption phenotype">
    <text evidence="3">Leads to rapamycin resistance when grown on glutamate as the sole nitrogen source.</text>
</comment>
<comment type="miscellaneous">
    <text evidence="2">Present with 7400 molecules/cell in log phase SD medium.</text>
</comment>
<comment type="similarity">
    <text evidence="4">Belongs to the Glu/Leu/Phe/Val dehydrogenases family.</text>
</comment>
<keyword id="KW-0520">NAD</keyword>
<keyword id="KW-0560">Oxidoreductase</keyword>
<keyword id="KW-0597">Phosphoprotein</keyword>
<keyword id="KW-1185">Reference proteome</keyword>
<dbReference type="EC" id="1.4.1.2"/>
<dbReference type="EMBL" id="S66436">
    <property type="protein sequence ID" value="AAB20327.1"/>
    <property type="molecule type" value="Genomic_DNA"/>
</dbReference>
<dbReference type="EMBL" id="X99000">
    <property type="protein sequence ID" value="CAA67475.1"/>
    <property type="molecule type" value="Genomic_DNA"/>
</dbReference>
<dbReference type="EMBL" id="Z74263">
    <property type="protein sequence ID" value="CAA98793.1"/>
    <property type="molecule type" value="Genomic_DNA"/>
</dbReference>
<dbReference type="EMBL" id="X72015">
    <property type="protein sequence ID" value="CAA50894.1"/>
    <property type="molecule type" value="Genomic_DNA"/>
</dbReference>
<dbReference type="EMBL" id="BK006938">
    <property type="protein sequence ID" value="DAA11649.1"/>
    <property type="molecule type" value="Genomic_DNA"/>
</dbReference>
<dbReference type="PIR" id="S37676">
    <property type="entry name" value="S37676"/>
</dbReference>
<dbReference type="RefSeq" id="NP_010066.1">
    <property type="nucleotide sequence ID" value="NM_001180275.1"/>
</dbReference>
<dbReference type="SMR" id="P33327"/>
<dbReference type="BioGRID" id="31830">
    <property type="interactions" value="157"/>
</dbReference>
<dbReference type="DIP" id="DIP-1689N"/>
<dbReference type="FunCoup" id="P33327">
    <property type="interactions" value="146"/>
</dbReference>
<dbReference type="IntAct" id="P33327">
    <property type="interactions" value="22"/>
</dbReference>
<dbReference type="MINT" id="P33327"/>
<dbReference type="STRING" id="4932.YDL215C"/>
<dbReference type="iPTMnet" id="P33327"/>
<dbReference type="PaxDb" id="4932-YDL215C"/>
<dbReference type="PeptideAtlas" id="P33327"/>
<dbReference type="EnsemblFungi" id="YDL215C_mRNA">
    <property type="protein sequence ID" value="YDL215C"/>
    <property type="gene ID" value="YDL215C"/>
</dbReference>
<dbReference type="GeneID" id="851311"/>
<dbReference type="KEGG" id="sce:YDL215C"/>
<dbReference type="AGR" id="SGD:S000002374"/>
<dbReference type="SGD" id="S000002374">
    <property type="gene designation" value="GDH2"/>
</dbReference>
<dbReference type="VEuPathDB" id="FungiDB:YDL215C"/>
<dbReference type="eggNOG" id="KOG2250">
    <property type="taxonomic scope" value="Eukaryota"/>
</dbReference>
<dbReference type="GeneTree" id="ENSGT00390000000854"/>
<dbReference type="HOGENOM" id="CLU_005220_0_0_1"/>
<dbReference type="InParanoid" id="P33327"/>
<dbReference type="OMA" id="DEYGMTS"/>
<dbReference type="OrthoDB" id="184415at2759"/>
<dbReference type="BioCyc" id="MetaCyc:YDL215C-MONOMER"/>
<dbReference type="BioCyc" id="YEAST:YDL215C-MONOMER"/>
<dbReference type="BRENDA" id="1.4.1.2">
    <property type="organism ID" value="984"/>
</dbReference>
<dbReference type="BioGRID-ORCS" id="851311">
    <property type="hits" value="0 hits in 10 CRISPR screens"/>
</dbReference>
<dbReference type="PRO" id="PR:P33327"/>
<dbReference type="Proteomes" id="UP000002311">
    <property type="component" value="Chromosome IV"/>
</dbReference>
<dbReference type="RNAct" id="P33327">
    <property type="molecule type" value="protein"/>
</dbReference>
<dbReference type="GO" id="GO:0005829">
    <property type="term" value="C:cytosol"/>
    <property type="evidence" value="ECO:0000314"/>
    <property type="project" value="SGD"/>
</dbReference>
<dbReference type="GO" id="GO:0005739">
    <property type="term" value="C:mitochondrion"/>
    <property type="evidence" value="ECO:0007005"/>
    <property type="project" value="SGD"/>
</dbReference>
<dbReference type="GO" id="GO:0004352">
    <property type="term" value="F:glutamate dehydrogenase (NAD+) activity"/>
    <property type="evidence" value="ECO:0000314"/>
    <property type="project" value="SGD"/>
</dbReference>
<dbReference type="GO" id="GO:0006538">
    <property type="term" value="P:glutamate catabolic process"/>
    <property type="evidence" value="ECO:0000318"/>
    <property type="project" value="GO_Central"/>
</dbReference>
<dbReference type="Gene3D" id="3.40.50.720">
    <property type="entry name" value="NAD(P)-binding Rossmann-like Domain"/>
    <property type="match status" value="1"/>
</dbReference>
<dbReference type="InterPro" id="IPR046346">
    <property type="entry name" value="Aminoacid_DH-like_N_sf"/>
</dbReference>
<dbReference type="InterPro" id="IPR006096">
    <property type="entry name" value="Glu/Leu/Phe/Val/Trp_DH_C"/>
</dbReference>
<dbReference type="InterPro" id="IPR033524">
    <property type="entry name" value="Glu/Leu/Phe/Val_DH_AS"/>
</dbReference>
<dbReference type="InterPro" id="IPR036291">
    <property type="entry name" value="NAD(P)-bd_dom_sf"/>
</dbReference>
<dbReference type="InterPro" id="IPR056365">
    <property type="entry name" value="NAD-GDH_2nd"/>
</dbReference>
<dbReference type="InterPro" id="IPR016210">
    <property type="entry name" value="NAD-GDH_euk"/>
</dbReference>
<dbReference type="InterPro" id="IPR055480">
    <property type="entry name" value="NAD-GDH_N"/>
</dbReference>
<dbReference type="PANTHER" id="PTHR11606">
    <property type="entry name" value="GLUTAMATE DEHYDROGENASE"/>
    <property type="match status" value="1"/>
</dbReference>
<dbReference type="PANTHER" id="PTHR11606:SF24">
    <property type="entry name" value="NAD-SPECIFIC GLUTAMATE DEHYDROGENASE"/>
    <property type="match status" value="1"/>
</dbReference>
<dbReference type="Pfam" id="PF00208">
    <property type="entry name" value="ELFV_dehydrog"/>
    <property type="match status" value="1"/>
</dbReference>
<dbReference type="Pfam" id="PF23147">
    <property type="entry name" value="GDH2_N"/>
    <property type="match status" value="1"/>
</dbReference>
<dbReference type="Pfam" id="PF23152">
    <property type="entry name" value="GDH_2nd"/>
    <property type="match status" value="1"/>
</dbReference>
<dbReference type="PIRSF" id="PIRSF000184">
    <property type="entry name" value="GDH_NAD"/>
    <property type="match status" value="1"/>
</dbReference>
<dbReference type="SMART" id="SM00839">
    <property type="entry name" value="ELFV_dehydrog"/>
    <property type="match status" value="1"/>
</dbReference>
<dbReference type="SUPFAM" id="SSF53223">
    <property type="entry name" value="Aminoacid dehydrogenase-like, N-terminal domain"/>
    <property type="match status" value="1"/>
</dbReference>
<dbReference type="SUPFAM" id="SSF51735">
    <property type="entry name" value="NAD(P)-binding Rossmann-fold domains"/>
    <property type="match status" value="1"/>
</dbReference>
<dbReference type="PROSITE" id="PS00074">
    <property type="entry name" value="GLFV_DEHYDROGENASE"/>
    <property type="match status" value="1"/>
</dbReference>
<feature type="chain" id="PRO_0000182733" description="NAD-specific glutamate dehydrogenase">
    <location>
        <begin position="1"/>
        <end position="1092"/>
    </location>
</feature>
<feature type="active site" evidence="1">
    <location>
        <position position="626"/>
    </location>
</feature>
<reference key="1">
    <citation type="journal article" date="1993" name="Eur. J. Biochem.">
        <title>The role of the NAD-dependent glutamate dehydrogenase in restoring growth on glucose of a Saccharomyces cerevisiae phosphoglucose isomerase mutant.</title>
        <authorList>
            <person name="Boles E."/>
            <person name="Lehnert W."/>
            <person name="Zimmermann F.K."/>
        </authorList>
    </citation>
    <scope>NUCLEOTIDE SEQUENCE [GENOMIC DNA]</scope>
    <source>
        <strain>EBY23</strain>
    </source>
</reference>
<reference key="2">
    <citation type="journal article" date="1997" name="Nature">
        <title>The nucleotide sequence of Saccharomyces cerevisiae chromosome IV.</title>
        <authorList>
            <person name="Jacq C."/>
            <person name="Alt-Moerbe J."/>
            <person name="Andre B."/>
            <person name="Arnold W."/>
            <person name="Bahr A."/>
            <person name="Ballesta J.P.G."/>
            <person name="Bargues M."/>
            <person name="Baron L."/>
            <person name="Becker A."/>
            <person name="Biteau N."/>
            <person name="Bloecker H."/>
            <person name="Blugeon C."/>
            <person name="Boskovic J."/>
            <person name="Brandt P."/>
            <person name="Brueckner M."/>
            <person name="Buitrago M.J."/>
            <person name="Coster F."/>
            <person name="Delaveau T."/>
            <person name="del Rey F."/>
            <person name="Dujon B."/>
            <person name="Eide L.G."/>
            <person name="Garcia-Cantalejo J.M."/>
            <person name="Goffeau A."/>
            <person name="Gomez-Peris A."/>
            <person name="Granotier C."/>
            <person name="Hanemann V."/>
            <person name="Hankeln T."/>
            <person name="Hoheisel J.D."/>
            <person name="Jaeger W."/>
            <person name="Jimenez A."/>
            <person name="Jonniaux J.-L."/>
            <person name="Kraemer C."/>
            <person name="Kuester H."/>
            <person name="Laamanen P."/>
            <person name="Legros Y."/>
            <person name="Louis E.J."/>
            <person name="Moeller-Rieker S."/>
            <person name="Monnet A."/>
            <person name="Moro M."/>
            <person name="Mueller-Auer S."/>
            <person name="Nussbaumer B."/>
            <person name="Paricio N."/>
            <person name="Paulin L."/>
            <person name="Perea J."/>
            <person name="Perez-Alonso M."/>
            <person name="Perez-Ortin J.E."/>
            <person name="Pohl T.M."/>
            <person name="Prydz H."/>
            <person name="Purnelle B."/>
            <person name="Rasmussen S.W."/>
            <person name="Remacha M.A."/>
            <person name="Revuelta J.L."/>
            <person name="Rieger M."/>
            <person name="Salom D."/>
            <person name="Saluz H.P."/>
            <person name="Saiz J.E."/>
            <person name="Saren A.-M."/>
            <person name="Schaefer M."/>
            <person name="Scharfe M."/>
            <person name="Schmidt E.R."/>
            <person name="Schneider C."/>
            <person name="Scholler P."/>
            <person name="Schwarz S."/>
            <person name="Soler-Mira A."/>
            <person name="Urrestarazu L.A."/>
            <person name="Verhasselt P."/>
            <person name="Vissers S."/>
            <person name="Voet M."/>
            <person name="Volckaert G."/>
            <person name="Wagner G."/>
            <person name="Wambutt R."/>
            <person name="Wedler E."/>
            <person name="Wedler H."/>
            <person name="Woelfl S."/>
            <person name="Harris D.E."/>
            <person name="Bowman S."/>
            <person name="Brown D."/>
            <person name="Churcher C.M."/>
            <person name="Connor R."/>
            <person name="Dedman K."/>
            <person name="Gentles S."/>
            <person name="Hamlin N."/>
            <person name="Hunt S."/>
            <person name="Jones L."/>
            <person name="McDonald S."/>
            <person name="Murphy L.D."/>
            <person name="Niblett D."/>
            <person name="Odell C."/>
            <person name="Oliver K."/>
            <person name="Rajandream M.A."/>
            <person name="Richards C."/>
            <person name="Shore L."/>
            <person name="Walsh S.V."/>
            <person name="Barrell B.G."/>
            <person name="Dietrich F.S."/>
            <person name="Mulligan J.T."/>
            <person name="Allen E."/>
            <person name="Araujo R."/>
            <person name="Aviles E."/>
            <person name="Berno A."/>
            <person name="Carpenter J."/>
            <person name="Chen E."/>
            <person name="Cherry J.M."/>
            <person name="Chung E."/>
            <person name="Duncan M."/>
            <person name="Hunicke-Smith S."/>
            <person name="Hyman R.W."/>
            <person name="Komp C."/>
            <person name="Lashkari D."/>
            <person name="Lew H."/>
            <person name="Lin D."/>
            <person name="Mosedale D."/>
            <person name="Nakahara K."/>
            <person name="Namath A."/>
            <person name="Oefner P."/>
            <person name="Oh C."/>
            <person name="Petel F.X."/>
            <person name="Roberts D."/>
            <person name="Schramm S."/>
            <person name="Schroeder M."/>
            <person name="Shogren T."/>
            <person name="Shroff N."/>
            <person name="Winant A."/>
            <person name="Yelton M.A."/>
            <person name="Botstein D."/>
            <person name="Davis R.W."/>
            <person name="Johnston M."/>
            <person name="Andrews S."/>
            <person name="Brinkman R."/>
            <person name="Cooper J."/>
            <person name="Ding H."/>
            <person name="Du Z."/>
            <person name="Favello A."/>
            <person name="Fulton L."/>
            <person name="Gattung S."/>
            <person name="Greco T."/>
            <person name="Hallsworth K."/>
            <person name="Hawkins J."/>
            <person name="Hillier L.W."/>
            <person name="Jier M."/>
            <person name="Johnson D."/>
            <person name="Johnston L."/>
            <person name="Kirsten J."/>
            <person name="Kucaba T."/>
            <person name="Langston Y."/>
            <person name="Latreille P."/>
            <person name="Le T."/>
            <person name="Mardis E."/>
            <person name="Menezes S."/>
            <person name="Miller N."/>
            <person name="Nhan M."/>
            <person name="Pauley A."/>
            <person name="Peluso D."/>
            <person name="Rifkin L."/>
            <person name="Riles L."/>
            <person name="Taich A."/>
            <person name="Trevaskis E."/>
            <person name="Vignati D."/>
            <person name="Wilcox L."/>
            <person name="Wohldman P."/>
            <person name="Vaudin M."/>
            <person name="Wilson R."/>
            <person name="Waterston R."/>
            <person name="Albermann K."/>
            <person name="Hani J."/>
            <person name="Heumann K."/>
            <person name="Kleine K."/>
            <person name="Mewes H.-W."/>
            <person name="Zollner A."/>
            <person name="Zaccaria P."/>
        </authorList>
    </citation>
    <scope>NUCLEOTIDE SEQUENCE [LARGE SCALE GENOMIC DNA]</scope>
    <source>
        <strain>ATCC 204508 / S288c</strain>
    </source>
</reference>
<reference key="3">
    <citation type="journal article" date="2014" name="G3 (Bethesda)">
        <title>The reference genome sequence of Saccharomyces cerevisiae: Then and now.</title>
        <authorList>
            <person name="Engel S.R."/>
            <person name="Dietrich F.S."/>
            <person name="Fisk D.G."/>
            <person name="Binkley G."/>
            <person name="Balakrishnan R."/>
            <person name="Costanzo M.C."/>
            <person name="Dwight S.S."/>
            <person name="Hitz B.C."/>
            <person name="Karra K."/>
            <person name="Nash R.S."/>
            <person name="Weng S."/>
            <person name="Wong E.D."/>
            <person name="Lloyd P."/>
            <person name="Skrzypek M.S."/>
            <person name="Miyasato S.R."/>
            <person name="Simison M."/>
            <person name="Cherry J.M."/>
        </authorList>
    </citation>
    <scope>GENOME REANNOTATION</scope>
    <source>
        <strain>ATCC 204508 / S288c</strain>
    </source>
</reference>
<reference key="4">
    <citation type="journal article" date="1991" name="Mol. Cell. Biol.">
        <title>Role of the complex upstream region of the GDH2 gene in nitrogen regulation of the NAD-linked glutamate dehydrogenase in Saccharomyces cerevisiae.</title>
        <authorList>
            <person name="Miller S.M."/>
            <person name="Magasanik B."/>
        </authorList>
    </citation>
    <scope>NUCLEOTIDE SEQUENCE [GENOMIC DNA] OF 1-79</scope>
</reference>
<reference key="5">
    <citation type="submission" date="1996-07" db="EMBL/GenBank/DDBJ databases">
        <authorList>
            <person name="Rasmussen S.W."/>
        </authorList>
    </citation>
    <scope>NUCLEOTIDE SEQUENCE [GENOMIC DNA] OF 848-1092</scope>
</reference>
<reference key="6">
    <citation type="journal article" date="2003" name="Nature">
        <title>Global analysis of protein expression in yeast.</title>
        <authorList>
            <person name="Ghaemmaghami S."/>
            <person name="Huh W.-K."/>
            <person name="Bower K."/>
            <person name="Howson R.W."/>
            <person name="Belle A."/>
            <person name="Dephoure N."/>
            <person name="O'Shea E.K."/>
            <person name="Weissman J.S."/>
        </authorList>
    </citation>
    <scope>LEVEL OF PROTEIN EXPRESSION [LARGE SCALE ANALYSIS]</scope>
</reference>
<reference key="7">
    <citation type="journal article" date="2008" name="Mol. Cell. Proteomics">
        <title>A multidimensional chromatography technology for in-depth phosphoproteome analysis.</title>
        <authorList>
            <person name="Albuquerque C.P."/>
            <person name="Smolka M.B."/>
            <person name="Payne S.H."/>
            <person name="Bafna V."/>
            <person name="Eng J."/>
            <person name="Zhou H."/>
        </authorList>
    </citation>
    <scope>IDENTIFICATION BY MASS SPECTROMETRY [LARGE SCALE ANALYSIS]</scope>
</reference>
<reference key="8">
    <citation type="journal article" date="2010" name="Science">
        <title>A global protein kinase and phosphatase interaction network in yeast.</title>
        <authorList>
            <person name="Breitkreutz A."/>
            <person name="Choi H."/>
            <person name="Sharom J.R."/>
            <person name="Boucher L."/>
            <person name="Neduva V."/>
            <person name="Larsen B."/>
            <person name="Lin Z.Y."/>
            <person name="Breitkreutz B.J."/>
            <person name="Stark C."/>
            <person name="Liu G."/>
            <person name="Ahn J."/>
            <person name="Dewar-Darch D."/>
            <person name="Reguly T."/>
            <person name="Tang X."/>
            <person name="Almeida R."/>
            <person name="Qin Z.S."/>
            <person name="Pawson T."/>
            <person name="Gingras A.C."/>
            <person name="Nesvizhskii A.I."/>
            <person name="Tyers M."/>
        </authorList>
    </citation>
    <scope>INTERACTION WITH NNK1</scope>
    <scope>DISRUPTION PHENOTYPE</scope>
    <scope>PHOSPHORYLATION</scope>
</reference>
<reference key="9">
    <citation type="journal article" date="2012" name="Proc. Natl. Acad. Sci. U.S.A.">
        <title>N-terminal acetylome analyses and functional insights of the N-terminal acetyltransferase NatB.</title>
        <authorList>
            <person name="Van Damme P."/>
            <person name="Lasa M."/>
            <person name="Polevoda B."/>
            <person name="Gazquez C."/>
            <person name="Elosegui-Artola A."/>
            <person name="Kim D.S."/>
            <person name="De Juan-Pardo E."/>
            <person name="Demeyer K."/>
            <person name="Hole K."/>
            <person name="Larrea E."/>
            <person name="Timmerman E."/>
            <person name="Prieto J."/>
            <person name="Arnesen T."/>
            <person name="Sherman F."/>
            <person name="Gevaert K."/>
            <person name="Aldabe R."/>
        </authorList>
    </citation>
    <scope>IDENTIFICATION BY MASS SPECTROMETRY [LARGE SCALE ANALYSIS]</scope>
</reference>
<evidence type="ECO:0000255" key="1">
    <source>
        <dbReference type="PROSITE-ProRule" id="PRU10011"/>
    </source>
</evidence>
<evidence type="ECO:0000269" key="2">
    <source>
    </source>
</evidence>
<evidence type="ECO:0000269" key="3">
    <source>
    </source>
</evidence>
<evidence type="ECO:0000305" key="4"/>
<gene>
    <name type="primary">GDH2</name>
    <name type="ordered locus">YDL215C</name>
    <name type="ORF">D0892</name>
</gene>
<sequence>MLFDNKNRGALNSLNTPDIASLSISSMSDYHVFDFPGKDLQREEVIDLLDQQGFIPDDLIEQEVDWFYNSLGIDDLFFSRESPQLISNIIHSLYASKLDFFAKSKFNGIQPRLFSIKNKIITNDNHAIFMESNTGVSISDSQQKNFKFASDAVGNDTLEHGKDTIKKNRIEMDDSCPPYELDSEIDDLFLDNKSQKNCRLVSFWAPESELKLTFVYESVYPNDDPAGVDISSQDLLKGDIESISDKTMYKVSSNENKKLYGLLLKLVKEREGPVIKTTRSVENKDEIRLLVAYKRFTTKRYYSALNSLFHYYKLKPSKFYLESFNVKDDDIIIFSVYLNENQQLEDVLLHDVEAALKQVEREASLLYAIPNNSFHEVYQRRQFSPKEAIYAHIGAIFINHFVNRLGSDYQNLLSQITIKRNDTTLLEIVENLKRKLRNETLTQQTIINIMSKHYTIISKLYKNFAQIHYYHNSTKDMEKTLSFQRLEKVEPFKNDQEFEAYLNKFIPNDSPDLLILKTLNIFNKSILKTNFFITRKVAISFRLDPSLVMTKFEYPETPYGIFFVVGNTFKGFHIRFRDIARGGIRIVCSRNQDIYDLNSKNVIDENYQLASTQQRKNKDIPEGGSKGVILLNPGLVEHDQTFVAFSQYVDAMIDILINDPLKENYVNLLPKEEILFFGPDEGTAGFVDWATNHARVRNCPWWKSFLTGKSPSLGGIPHDEYGMTSLGVRAYVNKIYETLNLTNSTVYKFQTGGPDGDLGSNEILLSSPNECYLAILDGSGVLCDPKGLDKDELCRLAHERKMISDFDTSKLSNNGFFVSVDAMDIMLPNGTIVANGTTFRNTFHTQIFKFVDHVDIFVPCGGRPNSITLNNLHYFVDEKTGKCKIPYIVEGANLFITQPAKNALEEHGCILFKDASANKGGVTSSSMEVLASLALNDNDFVHKFIGDVSGERSALYKSYVVEVQSRIQKNAELEFGQLWNLNQLNGTHISEISNQLSFTINKLNDDLVASQELWLNDLKLRNYLLLDKIIPKILIDVAGPQSVLENIPESYLKVLLSSYLSSTFVYQNGIDVNIGKFLEFIGGLKREAEASA</sequence>
<accession>P33327</accession>
<accession>D6VRD9</accession>
<protein>
    <recommendedName>
        <fullName>NAD-specific glutamate dehydrogenase</fullName>
        <shortName>NAD-GDH</shortName>
        <ecNumber>1.4.1.2</ecNumber>
    </recommendedName>
</protein>